<feature type="chain" id="PRO_0000057350" description="tRNA pseudouridine synthase A">
    <location>
        <begin position="1"/>
        <end position="264"/>
    </location>
</feature>
<feature type="active site" description="Nucleophile" evidence="1">
    <location>
        <position position="56"/>
    </location>
</feature>
<feature type="binding site" evidence="1">
    <location>
        <position position="114"/>
    </location>
    <ligand>
        <name>substrate</name>
    </ligand>
</feature>
<organism>
    <name type="scientific">Buchnera aphidicola subsp. Baizongia pistaciae (strain Bp)</name>
    <dbReference type="NCBI Taxonomy" id="224915"/>
    <lineage>
        <taxon>Bacteria</taxon>
        <taxon>Pseudomonadati</taxon>
        <taxon>Pseudomonadota</taxon>
        <taxon>Gammaproteobacteria</taxon>
        <taxon>Enterobacterales</taxon>
        <taxon>Erwiniaceae</taxon>
        <taxon>Buchnera</taxon>
    </lineage>
</organism>
<name>TRUA_BUCBP</name>
<gene>
    <name evidence="1" type="primary">truA</name>
    <name type="ordered locus">bbp_185</name>
</gene>
<accession>P59508</accession>
<proteinExistence type="inferred from homology"/>
<reference key="1">
    <citation type="journal article" date="2003" name="Proc. Natl. Acad. Sci. U.S.A.">
        <title>Reductive genome evolution in Buchnera aphidicola.</title>
        <authorList>
            <person name="van Ham R.C.H.J."/>
            <person name="Kamerbeek J."/>
            <person name="Palacios C."/>
            <person name="Rausell C."/>
            <person name="Abascal F."/>
            <person name="Bastolla U."/>
            <person name="Fernandez J.M."/>
            <person name="Jimenez L."/>
            <person name="Postigo M."/>
            <person name="Silva F.J."/>
            <person name="Tamames J."/>
            <person name="Viguera E."/>
            <person name="Latorre A."/>
            <person name="Valencia A."/>
            <person name="Moran F."/>
            <person name="Moya A."/>
        </authorList>
    </citation>
    <scope>NUCLEOTIDE SEQUENCE [LARGE SCALE GENOMIC DNA]</scope>
    <source>
        <strain>Bp</strain>
    </source>
</reference>
<sequence>MYKECFKIALGIEYNGSNYHGWQYQKFASSVQEKVELALSIIANHPVRVTCAGRTDAGVHSTGQVVHFCTSSIRNDQAWILGTNRYLPKDISVIWKRDVPMHFHARYSALSRRYRYILYNNSCRSSIFYQGLKFYHRILNVEKMNQAAQYLLGEHDFTTFRSSHCQSKTPFRKILYVNVFCINCLIIIDIVANSFLYHMVRNIVGCLIEIGISKKKVTWIRDILKFKNRTSSTKIVESNGLYLVQVQYSSLFKLPICPVGPFFV</sequence>
<comment type="function">
    <text evidence="1">Formation of pseudouridine at positions 38, 39 and 40 in the anticodon stem and loop of transfer RNAs.</text>
</comment>
<comment type="catalytic activity">
    <reaction evidence="1">
        <text>uridine(38/39/40) in tRNA = pseudouridine(38/39/40) in tRNA</text>
        <dbReference type="Rhea" id="RHEA:22376"/>
        <dbReference type="Rhea" id="RHEA-COMP:10085"/>
        <dbReference type="Rhea" id="RHEA-COMP:10087"/>
        <dbReference type="ChEBI" id="CHEBI:65314"/>
        <dbReference type="ChEBI" id="CHEBI:65315"/>
        <dbReference type="EC" id="5.4.99.12"/>
    </reaction>
</comment>
<comment type="subunit">
    <text evidence="1">Homodimer.</text>
</comment>
<comment type="similarity">
    <text evidence="1">Belongs to the tRNA pseudouridine synthase TruA family.</text>
</comment>
<dbReference type="EC" id="5.4.99.12" evidence="1"/>
<dbReference type="EMBL" id="AE016826">
    <property type="protein sequence ID" value="AAO26917.1"/>
    <property type="molecule type" value="Genomic_DNA"/>
</dbReference>
<dbReference type="RefSeq" id="WP_011091318.1">
    <property type="nucleotide sequence ID" value="NC_004545.1"/>
</dbReference>
<dbReference type="SMR" id="P59508"/>
<dbReference type="STRING" id="224915.bbp_185"/>
<dbReference type="KEGG" id="bab:bbp_185"/>
<dbReference type="eggNOG" id="COG0101">
    <property type="taxonomic scope" value="Bacteria"/>
</dbReference>
<dbReference type="HOGENOM" id="CLU_014673_0_2_6"/>
<dbReference type="OrthoDB" id="9811823at2"/>
<dbReference type="Proteomes" id="UP000000601">
    <property type="component" value="Chromosome"/>
</dbReference>
<dbReference type="GO" id="GO:0003723">
    <property type="term" value="F:RNA binding"/>
    <property type="evidence" value="ECO:0007669"/>
    <property type="project" value="InterPro"/>
</dbReference>
<dbReference type="GO" id="GO:0160147">
    <property type="term" value="F:tRNA pseudouridine(38-40) synthase activity"/>
    <property type="evidence" value="ECO:0007669"/>
    <property type="project" value="UniProtKB-EC"/>
</dbReference>
<dbReference type="GO" id="GO:0031119">
    <property type="term" value="P:tRNA pseudouridine synthesis"/>
    <property type="evidence" value="ECO:0007669"/>
    <property type="project" value="UniProtKB-UniRule"/>
</dbReference>
<dbReference type="CDD" id="cd02570">
    <property type="entry name" value="PseudoU_synth_EcTruA"/>
    <property type="match status" value="1"/>
</dbReference>
<dbReference type="FunFam" id="3.30.70.580:FF:000001">
    <property type="entry name" value="tRNA pseudouridine synthase A"/>
    <property type="match status" value="1"/>
</dbReference>
<dbReference type="Gene3D" id="3.30.70.660">
    <property type="entry name" value="Pseudouridine synthase I, catalytic domain, C-terminal subdomain"/>
    <property type="match status" value="1"/>
</dbReference>
<dbReference type="Gene3D" id="3.30.70.580">
    <property type="entry name" value="Pseudouridine synthase I, catalytic domain, N-terminal subdomain"/>
    <property type="match status" value="1"/>
</dbReference>
<dbReference type="HAMAP" id="MF_00171">
    <property type="entry name" value="TruA"/>
    <property type="match status" value="1"/>
</dbReference>
<dbReference type="InterPro" id="IPR020103">
    <property type="entry name" value="PsdUridine_synth_cat_dom_sf"/>
</dbReference>
<dbReference type="InterPro" id="IPR001406">
    <property type="entry name" value="PsdUridine_synth_TruA"/>
</dbReference>
<dbReference type="InterPro" id="IPR020097">
    <property type="entry name" value="PsdUridine_synth_TruA_a/b_dom"/>
</dbReference>
<dbReference type="InterPro" id="IPR020095">
    <property type="entry name" value="PsdUridine_synth_TruA_C"/>
</dbReference>
<dbReference type="InterPro" id="IPR020094">
    <property type="entry name" value="TruA/RsuA/RluB/E/F_N"/>
</dbReference>
<dbReference type="NCBIfam" id="TIGR00071">
    <property type="entry name" value="hisT_truA"/>
    <property type="match status" value="1"/>
</dbReference>
<dbReference type="PANTHER" id="PTHR11142">
    <property type="entry name" value="PSEUDOURIDYLATE SYNTHASE"/>
    <property type="match status" value="1"/>
</dbReference>
<dbReference type="PANTHER" id="PTHR11142:SF0">
    <property type="entry name" value="TRNA PSEUDOURIDINE SYNTHASE-LIKE 1"/>
    <property type="match status" value="1"/>
</dbReference>
<dbReference type="Pfam" id="PF01416">
    <property type="entry name" value="PseudoU_synth_1"/>
    <property type="match status" value="2"/>
</dbReference>
<dbReference type="PIRSF" id="PIRSF001430">
    <property type="entry name" value="tRNA_psdUrid_synth"/>
    <property type="match status" value="1"/>
</dbReference>
<dbReference type="SUPFAM" id="SSF55120">
    <property type="entry name" value="Pseudouridine synthase"/>
    <property type="match status" value="1"/>
</dbReference>
<keyword id="KW-0413">Isomerase</keyword>
<keyword id="KW-1185">Reference proteome</keyword>
<keyword id="KW-0819">tRNA processing</keyword>
<protein>
    <recommendedName>
        <fullName evidence="1">tRNA pseudouridine synthase A</fullName>
        <ecNumber evidence="1">5.4.99.12</ecNumber>
    </recommendedName>
    <alternativeName>
        <fullName evidence="1">tRNA pseudouridine(38-40) synthase</fullName>
    </alternativeName>
    <alternativeName>
        <fullName evidence="1">tRNA pseudouridylate synthase I</fullName>
    </alternativeName>
    <alternativeName>
        <fullName evidence="1">tRNA-uridine isomerase I</fullName>
    </alternativeName>
</protein>
<evidence type="ECO:0000255" key="1">
    <source>
        <dbReference type="HAMAP-Rule" id="MF_00171"/>
    </source>
</evidence>